<name>COL_CHICK</name>
<reference key="1">
    <citation type="journal article" date="1984" name="Biochimie">
        <title>Evidence for the existence of procolipase in chicken pancreas and pancreatic juice.</title>
        <authorList>
            <person name="Bosc-Bierne I."/>
            <person name="Rathelot J."/>
            <person name="Bechis G."/>
            <person name="Delori P."/>
            <person name="Sarda L."/>
        </authorList>
    </citation>
    <scope>PROTEIN SEQUENCE</scope>
    <source>
        <tissue>Pancreas</tissue>
    </source>
</reference>
<reference key="2">
    <citation type="journal article" date="1981" name="Biochim. Biophys. Acta">
        <title>Isolation and partial structural characterization of chicken pancreatic colipase.</title>
        <authorList>
            <person name="Bosc-Bierne I."/>
            <person name="Rathelot J."/>
            <person name="Canioni P."/>
            <person name="Julien R."/>
            <person name="Bechis G."/>
            <person name="Gregorie J."/>
            <person name="Rochat H."/>
            <person name="Sarda L."/>
        </authorList>
    </citation>
    <scope>PROTEIN SEQUENCE</scope>
    <source>
        <tissue>Pancreas</tissue>
    </source>
</reference>
<accession>P11148</accession>
<organism>
    <name type="scientific">Gallus gallus</name>
    <name type="common">Chicken</name>
    <dbReference type="NCBI Taxonomy" id="9031"/>
    <lineage>
        <taxon>Eukaryota</taxon>
        <taxon>Metazoa</taxon>
        <taxon>Chordata</taxon>
        <taxon>Craniata</taxon>
        <taxon>Vertebrata</taxon>
        <taxon>Euteleostomi</taxon>
        <taxon>Archelosauria</taxon>
        <taxon>Archosauria</taxon>
        <taxon>Dinosauria</taxon>
        <taxon>Saurischia</taxon>
        <taxon>Theropoda</taxon>
        <taxon>Coelurosauria</taxon>
        <taxon>Aves</taxon>
        <taxon>Neognathae</taxon>
        <taxon>Galloanserae</taxon>
        <taxon>Galliformes</taxon>
        <taxon>Phasianidae</taxon>
        <taxon>Phasianinae</taxon>
        <taxon>Gallus</taxon>
    </lineage>
</organism>
<evidence type="ECO:0000255" key="1">
    <source>
        <dbReference type="PROSITE-ProRule" id="PRU00674"/>
    </source>
</evidence>
<keyword id="KW-0222">Digestion</keyword>
<keyword id="KW-0903">Direct protein sequencing</keyword>
<keyword id="KW-1015">Disulfide bond</keyword>
<keyword id="KW-0442">Lipid degradation</keyword>
<keyword id="KW-0443">Lipid metabolism</keyword>
<keyword id="KW-1185">Reference proteome</keyword>
<keyword id="KW-0964">Secreted</keyword>
<feature type="chain" id="PRO_0000144831" description="Colipase">
    <location>
        <begin position="1"/>
        <end position="34" status="greater than"/>
    </location>
</feature>
<feature type="disulfide bond" evidence="1">
    <location>
        <begin position="12"/>
        <end position="23"/>
    </location>
</feature>
<feature type="disulfide bond" evidence="1">
    <location>
        <begin position="18"/>
        <end position="34"/>
    </location>
</feature>
<feature type="unsure residue">
    <location>
        <position position="12"/>
    </location>
</feature>
<feature type="non-terminal residue">
    <location>
        <position position="34"/>
    </location>
</feature>
<gene>
    <name type="primary">CLPS</name>
</gene>
<proteinExistence type="evidence at protein level"/>
<protein>
    <recommendedName>
        <fullName>Colipase</fullName>
    </recommendedName>
</protein>
<sequence length="34" mass="3591">GLIFNLDTGELCLQSAQCKSECCQEDSGLSLAXC</sequence>
<dbReference type="PIR" id="A05330">
    <property type="entry name" value="A05330"/>
</dbReference>
<dbReference type="FunCoup" id="P11148">
    <property type="interactions" value="7"/>
</dbReference>
<dbReference type="STRING" id="9031.ENSGALP00000054639"/>
<dbReference type="PaxDb" id="9031-ENSGALP00000001320"/>
<dbReference type="eggNOG" id="ENOG502S4NY">
    <property type="taxonomic scope" value="Eukaryota"/>
</dbReference>
<dbReference type="InParanoid" id="P11148"/>
<dbReference type="OrthoDB" id="9826993at2759"/>
<dbReference type="Proteomes" id="UP000000539">
    <property type="component" value="Unassembled WGS sequence"/>
</dbReference>
<dbReference type="GO" id="GO:0005576">
    <property type="term" value="C:extracellular region"/>
    <property type="evidence" value="ECO:0007669"/>
    <property type="project" value="UniProtKB-SubCell"/>
</dbReference>
<dbReference type="GO" id="GO:0008047">
    <property type="term" value="F:enzyme activator activity"/>
    <property type="evidence" value="ECO:0007669"/>
    <property type="project" value="InterPro"/>
</dbReference>
<dbReference type="GO" id="GO:0007586">
    <property type="term" value="P:digestion"/>
    <property type="evidence" value="ECO:0007669"/>
    <property type="project" value="UniProtKB-KW"/>
</dbReference>
<dbReference type="GO" id="GO:0016042">
    <property type="term" value="P:lipid catabolic process"/>
    <property type="evidence" value="ECO:0007669"/>
    <property type="project" value="UniProtKB-KW"/>
</dbReference>
<dbReference type="Gene3D" id="2.10.80.10">
    <property type="entry name" value="Lipase, subunit A"/>
    <property type="match status" value="1"/>
</dbReference>
<dbReference type="InterPro" id="IPR001981">
    <property type="entry name" value="Colipase"/>
</dbReference>
<dbReference type="InterPro" id="IPR017913">
    <property type="entry name" value="Colipase_N"/>
</dbReference>
<dbReference type="Pfam" id="PF01114">
    <property type="entry name" value="Colipase"/>
    <property type="match status" value="1"/>
</dbReference>
<dbReference type="SUPFAM" id="SSF57190">
    <property type="entry name" value="Colipase-like"/>
    <property type="match status" value="1"/>
</dbReference>
<dbReference type="PROSITE" id="PS51342">
    <property type="entry name" value="COLIPASE_2"/>
    <property type="match status" value="1"/>
</dbReference>
<comment type="function">
    <text>Colipase is a cofactor of pancreatic lipase. It allows the lipase to anchor itself to the lipid-water interface. Without colipase the enzyme is washed off by bile salts, which have an inhibitory effect on the lipase.</text>
</comment>
<comment type="subunit">
    <text>Forms a 1:1 stoichiometric complex with pancreatic lipase.</text>
</comment>
<comment type="subcellular location">
    <subcellularLocation>
        <location>Secreted</location>
    </subcellularLocation>
</comment>
<comment type="tissue specificity">
    <text>Expressed by the pancreas.</text>
</comment>
<comment type="similarity">
    <text evidence="1">Belongs to the colipase family.</text>
</comment>